<accession>B2U1Y8</accession>
<protein>
    <recommendedName>
        <fullName evidence="1">UDP-N-acetylglucosamine 1-carboxyvinyltransferase</fullName>
        <ecNumber evidence="1">2.5.1.7</ecNumber>
    </recommendedName>
    <alternativeName>
        <fullName evidence="1">Enoylpyruvate transferase</fullName>
    </alternativeName>
    <alternativeName>
        <fullName evidence="1">UDP-N-acetylglucosamine enolpyruvyl transferase</fullName>
        <shortName evidence="1">EPT</shortName>
    </alternativeName>
</protein>
<gene>
    <name evidence="1" type="primary">murA</name>
    <name type="ordered locus">SbBS512_E3581</name>
</gene>
<sequence length="419" mass="44817">MDKFRVQGPTKLQGEVTISGAKNAALPILFAALLAEEPVEIQNVPKLKDVDTSMKLLSQLGAKVERNGSVHIDARDVNVFCAPYDLVKTMRASIWALGPLVARFGQGQVSLPGGCTIGARPVDLHISGLEQLGATIKLEEGYVKASVDGRLKGAHIVMDKVSVGATVTIMCAATLAEGTTIIENAAREPEIVDTANFLITLGAKISGQGTDRIVIEGVERLGGGVYRVLPDRIETGTFLVAAAISRGKIICRNAQPDTLDAVLAKLRDAGADIEVGEDWISLDMHGKRPKAVNVRTAPHPAFPTDMQAQFTLLNLVAEGTGFITETVFENRFMHVPELSRMGAHAEIESNTVICHGVEKLSGAQVMATDLRASASLVLAGCIAEGTTVVDRIYHIDRGYERIEDKLRALGANIKRVKGE</sequence>
<proteinExistence type="inferred from homology"/>
<feature type="chain" id="PRO_1000094725" description="UDP-N-acetylglucosamine 1-carboxyvinyltransferase">
    <location>
        <begin position="1"/>
        <end position="419"/>
    </location>
</feature>
<feature type="active site" description="Proton donor" evidence="1">
    <location>
        <position position="115"/>
    </location>
</feature>
<feature type="binding site" evidence="1">
    <location>
        <begin position="22"/>
        <end position="23"/>
    </location>
    <ligand>
        <name>phosphoenolpyruvate</name>
        <dbReference type="ChEBI" id="CHEBI:58702"/>
    </ligand>
</feature>
<feature type="binding site" evidence="1">
    <location>
        <position position="91"/>
    </location>
    <ligand>
        <name>UDP-N-acetyl-alpha-D-glucosamine</name>
        <dbReference type="ChEBI" id="CHEBI:57705"/>
    </ligand>
</feature>
<feature type="binding site" evidence="1">
    <location>
        <begin position="120"/>
        <end position="124"/>
    </location>
    <ligand>
        <name>UDP-N-acetyl-alpha-D-glucosamine</name>
        <dbReference type="ChEBI" id="CHEBI:57705"/>
    </ligand>
</feature>
<feature type="binding site" evidence="1">
    <location>
        <begin position="160"/>
        <end position="163"/>
    </location>
    <ligand>
        <name>UDP-N-acetyl-alpha-D-glucosamine</name>
        <dbReference type="ChEBI" id="CHEBI:57705"/>
    </ligand>
</feature>
<feature type="binding site" evidence="1">
    <location>
        <position position="305"/>
    </location>
    <ligand>
        <name>UDP-N-acetyl-alpha-D-glucosamine</name>
        <dbReference type="ChEBI" id="CHEBI:57705"/>
    </ligand>
</feature>
<feature type="binding site" evidence="1">
    <location>
        <position position="327"/>
    </location>
    <ligand>
        <name>UDP-N-acetyl-alpha-D-glucosamine</name>
        <dbReference type="ChEBI" id="CHEBI:57705"/>
    </ligand>
</feature>
<feature type="modified residue" description="2-(S-cysteinyl)pyruvic acid O-phosphothioketal" evidence="1">
    <location>
        <position position="115"/>
    </location>
</feature>
<evidence type="ECO:0000255" key="1">
    <source>
        <dbReference type="HAMAP-Rule" id="MF_00111"/>
    </source>
</evidence>
<keyword id="KW-0131">Cell cycle</keyword>
<keyword id="KW-0132">Cell division</keyword>
<keyword id="KW-0133">Cell shape</keyword>
<keyword id="KW-0961">Cell wall biogenesis/degradation</keyword>
<keyword id="KW-0963">Cytoplasm</keyword>
<keyword id="KW-0573">Peptidoglycan synthesis</keyword>
<keyword id="KW-0670">Pyruvate</keyword>
<keyword id="KW-1185">Reference proteome</keyword>
<keyword id="KW-0808">Transferase</keyword>
<dbReference type="EC" id="2.5.1.7" evidence="1"/>
<dbReference type="EMBL" id="CP001063">
    <property type="protein sequence ID" value="ACD07542.1"/>
    <property type="molecule type" value="Genomic_DNA"/>
</dbReference>
<dbReference type="RefSeq" id="WP_000357260.1">
    <property type="nucleotide sequence ID" value="NC_010658.1"/>
</dbReference>
<dbReference type="SMR" id="B2U1Y8"/>
<dbReference type="STRING" id="344609.SbBS512_E3581"/>
<dbReference type="KEGG" id="sbc:SbBS512_E3581"/>
<dbReference type="HOGENOM" id="CLU_027387_0_0_6"/>
<dbReference type="UniPathway" id="UPA00219"/>
<dbReference type="Proteomes" id="UP000001030">
    <property type="component" value="Chromosome"/>
</dbReference>
<dbReference type="GO" id="GO:0005737">
    <property type="term" value="C:cytoplasm"/>
    <property type="evidence" value="ECO:0007669"/>
    <property type="project" value="UniProtKB-SubCell"/>
</dbReference>
<dbReference type="GO" id="GO:0008760">
    <property type="term" value="F:UDP-N-acetylglucosamine 1-carboxyvinyltransferase activity"/>
    <property type="evidence" value="ECO:0007669"/>
    <property type="project" value="UniProtKB-UniRule"/>
</dbReference>
<dbReference type="GO" id="GO:0051301">
    <property type="term" value="P:cell division"/>
    <property type="evidence" value="ECO:0007669"/>
    <property type="project" value="UniProtKB-KW"/>
</dbReference>
<dbReference type="GO" id="GO:0071555">
    <property type="term" value="P:cell wall organization"/>
    <property type="evidence" value="ECO:0007669"/>
    <property type="project" value="UniProtKB-KW"/>
</dbReference>
<dbReference type="GO" id="GO:0009252">
    <property type="term" value="P:peptidoglycan biosynthetic process"/>
    <property type="evidence" value="ECO:0007669"/>
    <property type="project" value="UniProtKB-UniRule"/>
</dbReference>
<dbReference type="GO" id="GO:0008360">
    <property type="term" value="P:regulation of cell shape"/>
    <property type="evidence" value="ECO:0007669"/>
    <property type="project" value="UniProtKB-KW"/>
</dbReference>
<dbReference type="GO" id="GO:0019277">
    <property type="term" value="P:UDP-N-acetylgalactosamine biosynthetic process"/>
    <property type="evidence" value="ECO:0007669"/>
    <property type="project" value="InterPro"/>
</dbReference>
<dbReference type="CDD" id="cd01555">
    <property type="entry name" value="UdpNAET"/>
    <property type="match status" value="1"/>
</dbReference>
<dbReference type="FunFam" id="3.65.10.10:FF:000002">
    <property type="entry name" value="UDP-N-acetylglucosamine 1-carboxyvinyltransferase"/>
    <property type="match status" value="1"/>
</dbReference>
<dbReference type="Gene3D" id="3.65.10.10">
    <property type="entry name" value="Enolpyruvate transferase domain"/>
    <property type="match status" value="2"/>
</dbReference>
<dbReference type="HAMAP" id="MF_00111">
    <property type="entry name" value="MurA"/>
    <property type="match status" value="1"/>
</dbReference>
<dbReference type="InterPro" id="IPR001986">
    <property type="entry name" value="Enolpyruvate_Tfrase_dom"/>
</dbReference>
<dbReference type="InterPro" id="IPR036968">
    <property type="entry name" value="Enolpyruvate_Tfrase_sf"/>
</dbReference>
<dbReference type="InterPro" id="IPR050068">
    <property type="entry name" value="MurA_subfamily"/>
</dbReference>
<dbReference type="InterPro" id="IPR013792">
    <property type="entry name" value="RNA3'P_cycl/enolpyr_Trfase_a/b"/>
</dbReference>
<dbReference type="InterPro" id="IPR005750">
    <property type="entry name" value="UDP_GlcNAc_COvinyl_MurA"/>
</dbReference>
<dbReference type="NCBIfam" id="TIGR01072">
    <property type="entry name" value="murA"/>
    <property type="match status" value="1"/>
</dbReference>
<dbReference type="NCBIfam" id="NF006873">
    <property type="entry name" value="PRK09369.1"/>
    <property type="match status" value="1"/>
</dbReference>
<dbReference type="PANTHER" id="PTHR43783">
    <property type="entry name" value="UDP-N-ACETYLGLUCOSAMINE 1-CARBOXYVINYLTRANSFERASE"/>
    <property type="match status" value="1"/>
</dbReference>
<dbReference type="PANTHER" id="PTHR43783:SF1">
    <property type="entry name" value="UDP-N-ACETYLGLUCOSAMINE 1-CARBOXYVINYLTRANSFERASE"/>
    <property type="match status" value="1"/>
</dbReference>
<dbReference type="Pfam" id="PF00275">
    <property type="entry name" value="EPSP_synthase"/>
    <property type="match status" value="1"/>
</dbReference>
<dbReference type="SUPFAM" id="SSF55205">
    <property type="entry name" value="EPT/RTPC-like"/>
    <property type="match status" value="1"/>
</dbReference>
<organism>
    <name type="scientific">Shigella boydii serotype 18 (strain CDC 3083-94 / BS512)</name>
    <dbReference type="NCBI Taxonomy" id="344609"/>
    <lineage>
        <taxon>Bacteria</taxon>
        <taxon>Pseudomonadati</taxon>
        <taxon>Pseudomonadota</taxon>
        <taxon>Gammaproteobacteria</taxon>
        <taxon>Enterobacterales</taxon>
        <taxon>Enterobacteriaceae</taxon>
        <taxon>Shigella</taxon>
    </lineage>
</organism>
<name>MURA_SHIB3</name>
<comment type="function">
    <text evidence="1">Cell wall formation. Adds enolpyruvyl to UDP-N-acetylglucosamine.</text>
</comment>
<comment type="catalytic activity">
    <reaction evidence="1">
        <text>phosphoenolpyruvate + UDP-N-acetyl-alpha-D-glucosamine = UDP-N-acetyl-3-O-(1-carboxyvinyl)-alpha-D-glucosamine + phosphate</text>
        <dbReference type="Rhea" id="RHEA:18681"/>
        <dbReference type="ChEBI" id="CHEBI:43474"/>
        <dbReference type="ChEBI" id="CHEBI:57705"/>
        <dbReference type="ChEBI" id="CHEBI:58702"/>
        <dbReference type="ChEBI" id="CHEBI:68483"/>
        <dbReference type="EC" id="2.5.1.7"/>
    </reaction>
</comment>
<comment type="pathway">
    <text evidence="1">Cell wall biogenesis; peptidoglycan biosynthesis.</text>
</comment>
<comment type="subcellular location">
    <subcellularLocation>
        <location evidence="1">Cytoplasm</location>
    </subcellularLocation>
</comment>
<comment type="similarity">
    <text evidence="1">Belongs to the EPSP synthase family. MurA subfamily.</text>
</comment>
<reference key="1">
    <citation type="submission" date="2008-05" db="EMBL/GenBank/DDBJ databases">
        <title>Complete sequence of Shigella boydii serotype 18 strain BS512.</title>
        <authorList>
            <person name="Rasko D.A."/>
            <person name="Rosovitz M."/>
            <person name="Maurelli A.T."/>
            <person name="Myers G."/>
            <person name="Seshadri R."/>
            <person name="Cer R."/>
            <person name="Jiang L."/>
            <person name="Ravel J."/>
            <person name="Sebastian Y."/>
        </authorList>
    </citation>
    <scope>NUCLEOTIDE SEQUENCE [LARGE SCALE GENOMIC DNA]</scope>
    <source>
        <strain>CDC 3083-94 / BS512</strain>
    </source>
</reference>